<reference key="1">
    <citation type="journal article" date="2007" name="Genome Biol.">
        <title>Characterization and modeling of the Haemophilus influenzae core and supragenomes based on the complete genomic sequences of Rd and 12 clinical nontypeable strains.</title>
        <authorList>
            <person name="Hogg J.S."/>
            <person name="Hu F.Z."/>
            <person name="Janto B."/>
            <person name="Boissy R."/>
            <person name="Hayes J."/>
            <person name="Keefe R."/>
            <person name="Post J.C."/>
            <person name="Ehrlich G.D."/>
        </authorList>
    </citation>
    <scope>NUCLEOTIDE SEQUENCE [LARGE SCALE GENOMIC DNA]</scope>
    <source>
        <strain>PittGG</strain>
    </source>
</reference>
<keyword id="KW-0119">Carbohydrate metabolism</keyword>
<keyword id="KW-0963">Cytoplasm</keyword>
<keyword id="KW-0413">Isomerase</keyword>
<keyword id="KW-0460">Magnesium</keyword>
<keyword id="KW-0479">Metal-binding</keyword>
<keyword id="KW-0859">Xylose metabolism</keyword>
<feature type="chain" id="PRO_1000026443" description="Xylose isomerase">
    <location>
        <begin position="1"/>
        <end position="439"/>
    </location>
</feature>
<feature type="active site" evidence="1">
    <location>
        <position position="101"/>
    </location>
</feature>
<feature type="active site" evidence="1">
    <location>
        <position position="104"/>
    </location>
</feature>
<feature type="binding site" evidence="1">
    <location>
        <position position="232"/>
    </location>
    <ligand>
        <name>Mg(2+)</name>
        <dbReference type="ChEBI" id="CHEBI:18420"/>
        <label>1</label>
    </ligand>
</feature>
<feature type="binding site" evidence="1">
    <location>
        <position position="268"/>
    </location>
    <ligand>
        <name>Mg(2+)</name>
        <dbReference type="ChEBI" id="CHEBI:18420"/>
        <label>1</label>
    </ligand>
</feature>
<feature type="binding site" evidence="1">
    <location>
        <position position="268"/>
    </location>
    <ligand>
        <name>Mg(2+)</name>
        <dbReference type="ChEBI" id="CHEBI:18420"/>
        <label>2</label>
    </ligand>
</feature>
<feature type="binding site" evidence="1">
    <location>
        <position position="271"/>
    </location>
    <ligand>
        <name>Mg(2+)</name>
        <dbReference type="ChEBI" id="CHEBI:18420"/>
        <label>2</label>
    </ligand>
</feature>
<feature type="binding site" evidence="1">
    <location>
        <position position="296"/>
    </location>
    <ligand>
        <name>Mg(2+)</name>
        <dbReference type="ChEBI" id="CHEBI:18420"/>
        <label>1</label>
    </ligand>
</feature>
<feature type="binding site" evidence="1">
    <location>
        <position position="307"/>
    </location>
    <ligand>
        <name>Mg(2+)</name>
        <dbReference type="ChEBI" id="CHEBI:18420"/>
        <label>2</label>
    </ligand>
</feature>
<feature type="binding site" evidence="1">
    <location>
        <position position="309"/>
    </location>
    <ligand>
        <name>Mg(2+)</name>
        <dbReference type="ChEBI" id="CHEBI:18420"/>
        <label>2</label>
    </ligand>
</feature>
<feature type="binding site" evidence="1">
    <location>
        <position position="339"/>
    </location>
    <ligand>
        <name>Mg(2+)</name>
        <dbReference type="ChEBI" id="CHEBI:18420"/>
        <label>1</label>
    </ligand>
</feature>
<organism>
    <name type="scientific">Haemophilus influenzae (strain PittGG)</name>
    <dbReference type="NCBI Taxonomy" id="374931"/>
    <lineage>
        <taxon>Bacteria</taxon>
        <taxon>Pseudomonadati</taxon>
        <taxon>Pseudomonadota</taxon>
        <taxon>Gammaproteobacteria</taxon>
        <taxon>Pasteurellales</taxon>
        <taxon>Pasteurellaceae</taxon>
        <taxon>Haemophilus</taxon>
    </lineage>
</organism>
<gene>
    <name evidence="1" type="primary">xylA</name>
    <name type="ordered locus">CGSHiGG_09215</name>
</gene>
<dbReference type="EC" id="5.3.1.5" evidence="1"/>
<dbReference type="EMBL" id="CP000672">
    <property type="protein sequence ID" value="ABR00643.1"/>
    <property type="molecule type" value="Genomic_DNA"/>
</dbReference>
<dbReference type="SMR" id="A5UIN7"/>
<dbReference type="KEGG" id="hiq:CGSHiGG_09215"/>
<dbReference type="HOGENOM" id="CLU_037261_1_0_6"/>
<dbReference type="Proteomes" id="UP000001990">
    <property type="component" value="Chromosome"/>
</dbReference>
<dbReference type="GO" id="GO:0005737">
    <property type="term" value="C:cytoplasm"/>
    <property type="evidence" value="ECO:0007669"/>
    <property type="project" value="UniProtKB-SubCell"/>
</dbReference>
<dbReference type="GO" id="GO:0000287">
    <property type="term" value="F:magnesium ion binding"/>
    <property type="evidence" value="ECO:0007669"/>
    <property type="project" value="UniProtKB-UniRule"/>
</dbReference>
<dbReference type="GO" id="GO:0009045">
    <property type="term" value="F:xylose isomerase activity"/>
    <property type="evidence" value="ECO:0007669"/>
    <property type="project" value="UniProtKB-UniRule"/>
</dbReference>
<dbReference type="GO" id="GO:0042732">
    <property type="term" value="P:D-xylose metabolic process"/>
    <property type="evidence" value="ECO:0007669"/>
    <property type="project" value="UniProtKB-UniRule"/>
</dbReference>
<dbReference type="FunFam" id="3.20.20.150:FF:000002">
    <property type="entry name" value="Xylose isomerase"/>
    <property type="match status" value="1"/>
</dbReference>
<dbReference type="Gene3D" id="3.20.20.150">
    <property type="entry name" value="Divalent-metal-dependent TIM barrel enzymes"/>
    <property type="match status" value="1"/>
</dbReference>
<dbReference type="HAMAP" id="MF_00455">
    <property type="entry name" value="Xylose_isom_A"/>
    <property type="match status" value="1"/>
</dbReference>
<dbReference type="InterPro" id="IPR036237">
    <property type="entry name" value="Xyl_isomerase-like_sf"/>
</dbReference>
<dbReference type="InterPro" id="IPR013452">
    <property type="entry name" value="Xylose_isom_bac"/>
</dbReference>
<dbReference type="InterPro" id="IPR001998">
    <property type="entry name" value="Xylose_isomerase"/>
</dbReference>
<dbReference type="NCBIfam" id="NF003998">
    <property type="entry name" value="PRK05474.1"/>
    <property type="match status" value="1"/>
</dbReference>
<dbReference type="NCBIfam" id="TIGR02630">
    <property type="entry name" value="xylose_isom_A"/>
    <property type="match status" value="1"/>
</dbReference>
<dbReference type="PANTHER" id="PTHR48408">
    <property type="match status" value="1"/>
</dbReference>
<dbReference type="PANTHER" id="PTHR48408:SF1">
    <property type="entry name" value="XYLOSE ISOMERASE"/>
    <property type="match status" value="1"/>
</dbReference>
<dbReference type="PRINTS" id="PR00688">
    <property type="entry name" value="XYLOSISMRASE"/>
</dbReference>
<dbReference type="SUPFAM" id="SSF51658">
    <property type="entry name" value="Xylose isomerase-like"/>
    <property type="match status" value="1"/>
</dbReference>
<dbReference type="PROSITE" id="PS51415">
    <property type="entry name" value="XYLOSE_ISOMERASE"/>
    <property type="match status" value="1"/>
</dbReference>
<proteinExistence type="inferred from homology"/>
<accession>A5UIN7</accession>
<sequence length="439" mass="49906">MTSYFDKIEKISFEGEKSTNPFAFKHYDANQVILGKTMAEHLRLAVCYWHTFCWNGNDMFGLGSLERSWQKNPNLLAGAEQKADIAFEFLNKLGVPYYCFHDVDIAPEGNSVREYVQNFHHIVDILERKQVETGIQLLWGTANCFTNPRYMSGAATNPNPEVFAWAATQVFNAMNATQRLGGENYVLWGGREGYETLLNTDLKREREQIGRFMQMVVEHKHKIGFKGTLLIEPKPQEPTKHQYDYDVATVYGFLKQFGLEKEIKVNIEANHATLAGHTFQHEIATACALDIFGSIDANRGDPQLGWDTDQFPNSVEENTLVMYEILKHGGFTTGGFNFDAKIRRQSIDPYDLFYAHIGAIDVLALSLKRAAKMLQEETLQKIVNERYAGWNSELGQHILQGKTSLETLAQLVQQKDLAPKPVSGQQEYLENLVNQVIYS</sequence>
<evidence type="ECO:0000255" key="1">
    <source>
        <dbReference type="HAMAP-Rule" id="MF_00455"/>
    </source>
</evidence>
<protein>
    <recommendedName>
        <fullName evidence="1">Xylose isomerase</fullName>
        <ecNumber evidence="1">5.3.1.5</ecNumber>
    </recommendedName>
</protein>
<name>XYLA_HAEIG</name>
<comment type="catalytic activity">
    <reaction evidence="1">
        <text>alpha-D-xylose = alpha-D-xylulofuranose</text>
        <dbReference type="Rhea" id="RHEA:22816"/>
        <dbReference type="ChEBI" id="CHEBI:28518"/>
        <dbReference type="ChEBI" id="CHEBI:188998"/>
        <dbReference type="EC" id="5.3.1.5"/>
    </reaction>
</comment>
<comment type="cofactor">
    <cofactor evidence="1">
        <name>Mg(2+)</name>
        <dbReference type="ChEBI" id="CHEBI:18420"/>
    </cofactor>
    <text evidence="1">Binds 2 magnesium ions per subunit.</text>
</comment>
<comment type="subunit">
    <text evidence="1">Homotetramer.</text>
</comment>
<comment type="subcellular location">
    <subcellularLocation>
        <location evidence="1">Cytoplasm</location>
    </subcellularLocation>
</comment>
<comment type="similarity">
    <text evidence="1">Belongs to the xylose isomerase family.</text>
</comment>